<sequence length="284" mass="32492">MVLMIVSGRSGSGKSVALRALEDMGFYCVDNLPVVLLPDLARTLADREISAAVSIDVRNMPESPEIFEQAMSNLPDAFSPQLLFLDADRNTLIRRYSDTRRLHPLSSKNLSLESAIDKESDLLEPLRSRADLIVDTSEMSVHELAEMLRTRLLGKRERELTMVFESFGFKHGIPIDADYVFDVRFLPNPHWDPKLRPMTGLDKPVAAFLDRHTEVHNFIYQTRSYLELWLPMLETNNRSYLTVAIGCTGGKHRSVYIAEQLADYFRSRGKNVQSRHRTLEKRKP</sequence>
<evidence type="ECO:0000255" key="1">
    <source>
        <dbReference type="HAMAP-Rule" id="MF_00636"/>
    </source>
</evidence>
<reference key="1">
    <citation type="journal article" date="2005" name="Nucleic Acids Res.">
        <title>Genome dynamics and diversity of Shigella species, the etiologic agents of bacillary dysentery.</title>
        <authorList>
            <person name="Yang F."/>
            <person name="Yang J."/>
            <person name="Zhang X."/>
            <person name="Chen L."/>
            <person name="Jiang Y."/>
            <person name="Yan Y."/>
            <person name="Tang X."/>
            <person name="Wang J."/>
            <person name="Xiong Z."/>
            <person name="Dong J."/>
            <person name="Xue Y."/>
            <person name="Zhu Y."/>
            <person name="Xu X."/>
            <person name="Sun L."/>
            <person name="Chen S."/>
            <person name="Nie H."/>
            <person name="Peng J."/>
            <person name="Xu J."/>
            <person name="Wang Y."/>
            <person name="Yuan Z."/>
            <person name="Wen Y."/>
            <person name="Yao Z."/>
            <person name="Shen Y."/>
            <person name="Qiang B."/>
            <person name="Hou Y."/>
            <person name="Yu J."/>
            <person name="Jin Q."/>
        </authorList>
    </citation>
    <scope>NUCLEOTIDE SEQUENCE [LARGE SCALE GENOMIC DNA]</scope>
    <source>
        <strain>Ss046</strain>
    </source>
</reference>
<accession>Q3YX36</accession>
<protein>
    <recommendedName>
        <fullName evidence="1">RNase adapter protein RapZ</fullName>
    </recommendedName>
</protein>
<gene>
    <name evidence="1" type="primary">rapZ</name>
    <name type="ordered locus">SSON_3353</name>
</gene>
<feature type="chain" id="PRO_0000258999" description="RNase adapter protein RapZ">
    <location>
        <begin position="1"/>
        <end position="284"/>
    </location>
</feature>
<feature type="region of interest" description="RNA-binding" evidence="1">
    <location>
        <begin position="266"/>
        <end position="284"/>
    </location>
</feature>
<feature type="binding site" evidence="1">
    <location>
        <begin position="8"/>
        <end position="15"/>
    </location>
    <ligand>
        <name>ATP</name>
        <dbReference type="ChEBI" id="CHEBI:30616"/>
    </ligand>
</feature>
<feature type="binding site" evidence="1">
    <location>
        <begin position="56"/>
        <end position="59"/>
    </location>
    <ligand>
        <name>GTP</name>
        <dbReference type="ChEBI" id="CHEBI:37565"/>
    </ligand>
</feature>
<dbReference type="EMBL" id="CP000038">
    <property type="protein sequence ID" value="AAZ89926.1"/>
    <property type="molecule type" value="Genomic_DNA"/>
</dbReference>
<dbReference type="RefSeq" id="WP_000243741.1">
    <property type="nucleotide sequence ID" value="NC_007384.1"/>
</dbReference>
<dbReference type="SMR" id="Q3YX36"/>
<dbReference type="GeneID" id="93778776"/>
<dbReference type="KEGG" id="ssn:SSON_3353"/>
<dbReference type="HOGENOM" id="CLU_059558_1_1_6"/>
<dbReference type="Proteomes" id="UP000002529">
    <property type="component" value="Chromosome"/>
</dbReference>
<dbReference type="GO" id="GO:0005524">
    <property type="term" value="F:ATP binding"/>
    <property type="evidence" value="ECO:0007669"/>
    <property type="project" value="UniProtKB-UniRule"/>
</dbReference>
<dbReference type="GO" id="GO:0005525">
    <property type="term" value="F:GTP binding"/>
    <property type="evidence" value="ECO:0007669"/>
    <property type="project" value="UniProtKB-UniRule"/>
</dbReference>
<dbReference type="GO" id="GO:0003723">
    <property type="term" value="F:RNA binding"/>
    <property type="evidence" value="ECO:0007669"/>
    <property type="project" value="UniProtKB-KW"/>
</dbReference>
<dbReference type="Gene3D" id="3.40.50.300">
    <property type="entry name" value="P-loop containing nucleotide triphosphate hydrolases"/>
    <property type="match status" value="1"/>
</dbReference>
<dbReference type="HAMAP" id="MF_00636">
    <property type="entry name" value="RapZ_like"/>
    <property type="match status" value="1"/>
</dbReference>
<dbReference type="InterPro" id="IPR027417">
    <property type="entry name" value="P-loop_NTPase"/>
</dbReference>
<dbReference type="InterPro" id="IPR005337">
    <property type="entry name" value="RapZ-like"/>
</dbReference>
<dbReference type="InterPro" id="IPR053930">
    <property type="entry name" value="RapZ-like_N"/>
</dbReference>
<dbReference type="InterPro" id="IPR053931">
    <property type="entry name" value="RapZ_C"/>
</dbReference>
<dbReference type="NCBIfam" id="NF003828">
    <property type="entry name" value="PRK05416.1"/>
    <property type="match status" value="1"/>
</dbReference>
<dbReference type="PANTHER" id="PTHR30448">
    <property type="entry name" value="RNASE ADAPTER PROTEIN RAPZ"/>
    <property type="match status" value="1"/>
</dbReference>
<dbReference type="PANTHER" id="PTHR30448:SF0">
    <property type="entry name" value="RNASE ADAPTER PROTEIN RAPZ"/>
    <property type="match status" value="1"/>
</dbReference>
<dbReference type="Pfam" id="PF22740">
    <property type="entry name" value="PapZ_C"/>
    <property type="match status" value="1"/>
</dbReference>
<dbReference type="Pfam" id="PF03668">
    <property type="entry name" value="RapZ-like_N"/>
    <property type="match status" value="1"/>
</dbReference>
<dbReference type="PIRSF" id="PIRSF005052">
    <property type="entry name" value="P-loopkin"/>
    <property type="match status" value="1"/>
</dbReference>
<dbReference type="SUPFAM" id="SSF52540">
    <property type="entry name" value="P-loop containing nucleoside triphosphate hydrolases"/>
    <property type="match status" value="1"/>
</dbReference>
<keyword id="KW-0067">ATP-binding</keyword>
<keyword id="KW-0342">GTP-binding</keyword>
<keyword id="KW-0547">Nucleotide-binding</keyword>
<keyword id="KW-1185">Reference proteome</keyword>
<keyword id="KW-0694">RNA-binding</keyword>
<proteinExistence type="inferred from homology"/>
<comment type="function">
    <text evidence="1">Modulates the synthesis of GlmS, by affecting the processing and stability of the regulatory small RNA GlmZ. When glucosamine-6-phosphate (GlcN6P) concentrations are high in the cell, RapZ binds GlmZ and targets it to cleavage by RNase E. Consequently, GlmZ is inactivated and unable to activate GlmS synthesis. Under low GlcN6P concentrations, RapZ is sequestered and inactivated by an other regulatory small RNA, GlmY, preventing GlmZ degradation and leading to synthesis of GlmS.</text>
</comment>
<comment type="subunit">
    <text evidence="1">Homotrimer.</text>
</comment>
<comment type="similarity">
    <text evidence="1">Belongs to the RapZ-like family. RapZ subfamily.</text>
</comment>
<name>RAPZ_SHISS</name>
<organism>
    <name type="scientific">Shigella sonnei (strain Ss046)</name>
    <dbReference type="NCBI Taxonomy" id="300269"/>
    <lineage>
        <taxon>Bacteria</taxon>
        <taxon>Pseudomonadati</taxon>
        <taxon>Pseudomonadota</taxon>
        <taxon>Gammaproteobacteria</taxon>
        <taxon>Enterobacterales</taxon>
        <taxon>Enterobacteriaceae</taxon>
        <taxon>Shigella</taxon>
    </lineage>
</organism>